<evidence type="ECO:0000250" key="1"/>
<evidence type="ECO:0000250" key="2">
    <source>
        <dbReference type="UniProtKB" id="Q64256"/>
    </source>
</evidence>
<evidence type="ECO:0000256" key="3">
    <source>
        <dbReference type="SAM" id="MobiDB-lite"/>
    </source>
</evidence>
<evidence type="ECO:0000305" key="4"/>
<feature type="chain" id="PRO_0000261157" description="Protamine-3">
    <location>
        <begin position="1"/>
        <end position="93"/>
    </location>
</feature>
<feature type="region of interest" description="Disordered" evidence="3">
    <location>
        <begin position="1"/>
        <end position="93"/>
    </location>
</feature>
<feature type="compositionally biased region" description="Acidic residues" evidence="3">
    <location>
        <begin position="37"/>
        <end position="57"/>
    </location>
</feature>
<feature type="compositionally biased region" description="Polar residues" evidence="3">
    <location>
        <begin position="81"/>
        <end position="93"/>
    </location>
</feature>
<feature type="modified residue" description="Phosphoserine" evidence="2">
    <location>
        <position position="85"/>
    </location>
</feature>
<comment type="function">
    <text evidence="1">Protamines substitute for histones in the chromatin of sperm during the haploid phase of spermatogenesis. They compact sperm DNA into a highly condensed, stable and inactive complex (By similarity).</text>
</comment>
<comment type="subcellular location">
    <subcellularLocation>
        <location evidence="1">Nucleus</location>
    </subcellularLocation>
    <subcellularLocation>
        <location evidence="1">Chromosome</location>
    </subcellularLocation>
</comment>
<comment type="similarity">
    <text evidence="4">Belongs to the protamine P3 family.</text>
</comment>
<reference key="1">
    <citation type="submission" date="2005-10" db="EMBL/GenBank/DDBJ databases">
        <authorList>
            <consortium name="NIH - Mammalian Gene Collection (MGC) project"/>
        </authorList>
    </citation>
    <scope>NUCLEOTIDE SEQUENCE [LARGE SCALE MRNA]</scope>
    <source>
        <strain>Crossbred X Angus</strain>
        <tissue>Liver</tissue>
    </source>
</reference>
<sequence length="93" mass="10140">MGSRCAKLGTGHGRGHESSMKKLVACVSQDNFSLSSEGEEEEEGEEEEEEEGEEEELPVQGKLLLMEAGQQEEGAEDADSEVQQSPEPKQTRS</sequence>
<gene>
    <name type="primary">PRM3</name>
</gene>
<organism>
    <name type="scientific">Bos taurus</name>
    <name type="common">Bovine</name>
    <dbReference type="NCBI Taxonomy" id="9913"/>
    <lineage>
        <taxon>Eukaryota</taxon>
        <taxon>Metazoa</taxon>
        <taxon>Chordata</taxon>
        <taxon>Craniata</taxon>
        <taxon>Vertebrata</taxon>
        <taxon>Euteleostomi</taxon>
        <taxon>Mammalia</taxon>
        <taxon>Eutheria</taxon>
        <taxon>Laurasiatheria</taxon>
        <taxon>Artiodactyla</taxon>
        <taxon>Ruminantia</taxon>
        <taxon>Pecora</taxon>
        <taxon>Bovidae</taxon>
        <taxon>Bovinae</taxon>
        <taxon>Bos</taxon>
    </lineage>
</organism>
<proteinExistence type="inferred from homology"/>
<accession>Q32PA2</accession>
<dbReference type="EMBL" id="BC108198">
    <property type="protein sequence ID" value="AAI08199.1"/>
    <property type="molecule type" value="mRNA"/>
</dbReference>
<dbReference type="RefSeq" id="NP_001071521.1">
    <property type="nucleotide sequence ID" value="NM_001078053.2"/>
</dbReference>
<dbReference type="STRING" id="9913.ENSBTAP00000017347"/>
<dbReference type="PaxDb" id="9913-ENSBTAP00000017347"/>
<dbReference type="Ensembl" id="ENSBTAT00000017347.5">
    <property type="protein sequence ID" value="ENSBTAP00000017347.4"/>
    <property type="gene ID" value="ENSBTAG00000013051.5"/>
</dbReference>
<dbReference type="GeneID" id="615629"/>
<dbReference type="KEGG" id="bta:615629"/>
<dbReference type="CTD" id="58531"/>
<dbReference type="VEuPathDB" id="HostDB:ENSBTAG00000013051"/>
<dbReference type="VGNC" id="VGNC:33347">
    <property type="gene designation" value="PRM3"/>
</dbReference>
<dbReference type="eggNOG" id="ENOG502T3TU">
    <property type="taxonomic scope" value="Eukaryota"/>
</dbReference>
<dbReference type="GeneTree" id="ENSGT00390000001558"/>
<dbReference type="HOGENOM" id="CLU_2398985_0_0_1"/>
<dbReference type="InParanoid" id="Q32PA2"/>
<dbReference type="OMA" id="RCAKLNT"/>
<dbReference type="OrthoDB" id="9837884at2759"/>
<dbReference type="Proteomes" id="UP000009136">
    <property type="component" value="Chromosome 25"/>
</dbReference>
<dbReference type="Bgee" id="ENSBTAG00000013051">
    <property type="expression patterns" value="Expressed in semen and 30 other cell types or tissues"/>
</dbReference>
<dbReference type="GO" id="GO:0005737">
    <property type="term" value="C:cytoplasm"/>
    <property type="evidence" value="ECO:0000318"/>
    <property type="project" value="GO_Central"/>
</dbReference>
<dbReference type="GO" id="GO:0000786">
    <property type="term" value="C:nucleosome"/>
    <property type="evidence" value="ECO:0007669"/>
    <property type="project" value="UniProtKB-KW"/>
</dbReference>
<dbReference type="GO" id="GO:0005634">
    <property type="term" value="C:nucleus"/>
    <property type="evidence" value="ECO:0007669"/>
    <property type="project" value="UniProtKB-SubCell"/>
</dbReference>
<dbReference type="GO" id="GO:0003677">
    <property type="term" value="F:DNA binding"/>
    <property type="evidence" value="ECO:0007669"/>
    <property type="project" value="UniProtKB-KW"/>
</dbReference>
<dbReference type="GO" id="GO:0030154">
    <property type="term" value="P:cell differentiation"/>
    <property type="evidence" value="ECO:0007669"/>
    <property type="project" value="UniProtKB-KW"/>
</dbReference>
<dbReference type="GO" id="GO:0030261">
    <property type="term" value="P:chromosome condensation"/>
    <property type="evidence" value="ECO:0007669"/>
    <property type="project" value="UniProtKB-KW"/>
</dbReference>
<dbReference type="GO" id="GO:0030317">
    <property type="term" value="P:flagellated sperm motility"/>
    <property type="evidence" value="ECO:0000318"/>
    <property type="project" value="GO_Central"/>
</dbReference>
<dbReference type="GO" id="GO:0007283">
    <property type="term" value="P:spermatogenesis"/>
    <property type="evidence" value="ECO:0007669"/>
    <property type="project" value="UniProtKB-KW"/>
</dbReference>
<dbReference type="InterPro" id="IPR026077">
    <property type="entry name" value="PRMP3"/>
</dbReference>
<dbReference type="PANTHER" id="PTHR14317:SF0">
    <property type="entry name" value="PROTAMINE-3"/>
    <property type="match status" value="1"/>
</dbReference>
<dbReference type="PANTHER" id="PTHR14317">
    <property type="entry name" value="SPERM PROTAMINE P3"/>
    <property type="match status" value="1"/>
</dbReference>
<name>PRM3_BOVIN</name>
<protein>
    <recommendedName>
        <fullName>Protamine-3</fullName>
    </recommendedName>
    <alternativeName>
        <fullName>Sperm protamine P3</fullName>
    </alternativeName>
</protein>
<keyword id="KW-0158">Chromosome</keyword>
<keyword id="KW-0217">Developmental protein</keyword>
<keyword id="KW-0221">Differentiation</keyword>
<keyword id="KW-0226">DNA condensation</keyword>
<keyword id="KW-0238">DNA-binding</keyword>
<keyword id="KW-0544">Nucleosome core</keyword>
<keyword id="KW-0539">Nucleus</keyword>
<keyword id="KW-0597">Phosphoprotein</keyword>
<keyword id="KW-1185">Reference proteome</keyword>
<keyword id="KW-0744">Spermatogenesis</keyword>